<keyword id="KW-0002">3D-structure</keyword>
<keyword id="KW-0539">Nucleus</keyword>
<keyword id="KW-1185">Reference proteome</keyword>
<keyword id="KW-0677">Repeat</keyword>
<keyword id="KW-0687">Ribonucleoprotein</keyword>
<keyword id="KW-0690">Ribosome biogenesis</keyword>
<keyword id="KW-0698">rRNA processing</keyword>
<keyword id="KW-0804">Transcription</keyword>
<keyword id="KW-0853">WD repeat</keyword>
<proteinExistence type="evidence at protein level"/>
<reference key="1">
    <citation type="journal article" date="1997" name="Nature">
        <title>The nucleotide sequence of Saccharomyces cerevisiae chromosome XIII.</title>
        <authorList>
            <person name="Bowman S."/>
            <person name="Churcher C.M."/>
            <person name="Badcock K."/>
            <person name="Brown D."/>
            <person name="Chillingworth T."/>
            <person name="Connor R."/>
            <person name="Dedman K."/>
            <person name="Devlin K."/>
            <person name="Gentles S."/>
            <person name="Hamlin N."/>
            <person name="Hunt S."/>
            <person name="Jagels K."/>
            <person name="Lye G."/>
            <person name="Moule S."/>
            <person name="Odell C."/>
            <person name="Pearson D."/>
            <person name="Rajandream M.A."/>
            <person name="Rice P."/>
            <person name="Skelton J."/>
            <person name="Walsh S.V."/>
            <person name="Whitehead S."/>
            <person name="Barrell B.G."/>
        </authorList>
    </citation>
    <scope>NUCLEOTIDE SEQUENCE [LARGE SCALE GENOMIC DNA]</scope>
    <source>
        <strain>ATCC 204508 / S288c</strain>
    </source>
</reference>
<reference key="2">
    <citation type="journal article" date="2014" name="G3 (Bethesda)">
        <title>The reference genome sequence of Saccharomyces cerevisiae: Then and now.</title>
        <authorList>
            <person name="Engel S.R."/>
            <person name="Dietrich F.S."/>
            <person name="Fisk D.G."/>
            <person name="Binkley G."/>
            <person name="Balakrishnan R."/>
            <person name="Costanzo M.C."/>
            <person name="Dwight S.S."/>
            <person name="Hitz B.C."/>
            <person name="Karra K."/>
            <person name="Nash R.S."/>
            <person name="Weng S."/>
            <person name="Wong E.D."/>
            <person name="Lloyd P."/>
            <person name="Skrzypek M.S."/>
            <person name="Miyasato S.R."/>
            <person name="Simison M."/>
            <person name="Cherry J.M."/>
        </authorList>
    </citation>
    <scope>GENOME REANNOTATION</scope>
    <source>
        <strain>ATCC 204508 / S288c</strain>
    </source>
</reference>
<reference key="3">
    <citation type="journal article" date="2002" name="Nature">
        <title>A large nucleolar U3 ribonucleoprotein required for 18S ribosomal RNA biogenesis.</title>
        <authorList>
            <person name="Dragon F."/>
            <person name="Gallagher J.E.G."/>
            <person name="Compagnone-Post P.A."/>
            <person name="Mitchell B.M."/>
            <person name="Porwancher K.A."/>
            <person name="Wehner K.A."/>
            <person name="Wormsley S."/>
            <person name="Settlage R.E."/>
            <person name="Shabanowitz J."/>
            <person name="Osheim Y."/>
            <person name="Beyer A.L."/>
            <person name="Hunt D.F."/>
            <person name="Baserga S.J."/>
        </authorList>
    </citation>
    <scope>FUNCTION</scope>
    <scope>INTERACTION WITH MPP10 AND SNORNA U3</scope>
    <scope>IDENTIFICATION IN SSU PROCESSOME BY MASS SPECTROMETRY</scope>
    <scope>SUBCELLULAR LOCATION</scope>
</reference>
<reference key="4">
    <citation type="journal article" date="2003" name="Nature">
        <title>Global analysis of protein expression in yeast.</title>
        <authorList>
            <person name="Ghaemmaghami S."/>
            <person name="Huh W.-K."/>
            <person name="Bower K."/>
            <person name="Howson R.W."/>
            <person name="Belle A."/>
            <person name="Dephoure N."/>
            <person name="O'Shea E.K."/>
            <person name="Weissman J.S."/>
        </authorList>
    </citation>
    <scope>LEVEL OF PROTEIN EXPRESSION [LARGE SCALE ANALYSIS]</scope>
</reference>
<reference key="5">
    <citation type="journal article" date="2004" name="Genes Dev.">
        <title>RNA polymerase I transcription and pre-rRNA processing are linked by specific SSU processome components.</title>
        <authorList>
            <person name="Gallagher J.E.G."/>
            <person name="Dunbar D.A."/>
            <person name="Granneman S."/>
            <person name="Mitchell B.M."/>
            <person name="Osheim Y."/>
            <person name="Beyer A.L."/>
            <person name="Baserga S.J."/>
        </authorList>
    </citation>
    <scope>FUNCTION</scope>
    <scope>IDENTIFICATION IN COMPLEX WITH OTHER T-UTPS</scope>
    <scope>SUBCELLULAR LOCATION</scope>
</reference>
<sequence length="513" mass="57686">MSTARPRIITSKAPLLPQQTTPEQRYWRQYTSAQLVKEHNSVTHISFNPQHPHDFAVTSSTRVQIFSSRTRQVIKTFSRFKDVVYSASFRSDGKLLCAGDATGLVSVYDSYNPRTILLSINASTHPTHVTKFHTQDNKILATASDDRVTRLWDISNAYEPQLELTGATDYVRTLSFIPAAPHLVATGSYDGLIRLYDTRSSGSTPIYSLNHDQPVENVIAVSPTQIVSCGGNNFKVWDLTSNKKLYERGNFNKAVTCLDYVENFDSPMQSALIASSLDGHVKVFDPLDNFQVKFGWKFSGPVLSCAVSPSTAQGNRHLVAGLSSGLLAIRTKKKEKRSSDKENAPASFNKNAKSNNFQRMMRGSEYQGDQEHIIHNDKVRSQRRMRAFERNINQFKWSEALDNAFVPGMAKELTLTVLQELRKRGKVRVALYGRDESTLEPLLNWCLKGIEDVRSASIVADWVAVVLELYGNTLESSPVLQELMIDLKTKVRHEIHKSKEAQRIEGMLQLLTS</sequence>
<name>UTP15_YEAST</name>
<accession>Q04305</accession>
<accession>D6VZR6</accession>
<feature type="chain" id="PRO_0000051328" description="U3 small nucleolar RNA-associated protein 15">
    <location>
        <begin position="1"/>
        <end position="513"/>
    </location>
</feature>
<feature type="repeat" description="WD 1">
    <location>
        <begin position="37"/>
        <end position="78"/>
    </location>
</feature>
<feature type="repeat" description="WD 2">
    <location>
        <begin position="79"/>
        <end position="118"/>
    </location>
</feature>
<feature type="repeat" description="WD 3">
    <location>
        <begin position="124"/>
        <end position="162"/>
    </location>
</feature>
<feature type="repeat" description="WD 4">
    <location>
        <begin position="166"/>
        <end position="206"/>
    </location>
</feature>
<feature type="repeat" description="WD 5">
    <location>
        <begin position="210"/>
        <end position="247"/>
    </location>
</feature>
<feature type="repeat" description="WD 6">
    <location>
        <begin position="250"/>
        <end position="294"/>
    </location>
</feature>
<feature type="region of interest" description="Disordered" evidence="1">
    <location>
        <begin position="332"/>
        <end position="354"/>
    </location>
</feature>
<evidence type="ECO:0000256" key="1">
    <source>
        <dbReference type="SAM" id="MobiDB-lite"/>
    </source>
</evidence>
<evidence type="ECO:0000269" key="2">
    <source>
    </source>
</evidence>
<evidence type="ECO:0000269" key="3">
    <source>
    </source>
</evidence>
<evidence type="ECO:0000269" key="4">
    <source>
    </source>
</evidence>
<organism>
    <name type="scientific">Saccharomyces cerevisiae (strain ATCC 204508 / S288c)</name>
    <name type="common">Baker's yeast</name>
    <dbReference type="NCBI Taxonomy" id="559292"/>
    <lineage>
        <taxon>Eukaryota</taxon>
        <taxon>Fungi</taxon>
        <taxon>Dikarya</taxon>
        <taxon>Ascomycota</taxon>
        <taxon>Saccharomycotina</taxon>
        <taxon>Saccharomycetes</taxon>
        <taxon>Saccharomycetales</taxon>
        <taxon>Saccharomycetaceae</taxon>
        <taxon>Saccharomyces</taxon>
    </lineage>
</organism>
<gene>
    <name type="primary">UTP15</name>
    <name type="ordered locus">YMR093W</name>
    <name type="ORF">YM9582.18</name>
</gene>
<dbReference type="EMBL" id="Z49259">
    <property type="protein sequence ID" value="CAA89240.1"/>
    <property type="molecule type" value="Genomic_DNA"/>
</dbReference>
<dbReference type="EMBL" id="BK006946">
    <property type="protein sequence ID" value="DAA09990.1"/>
    <property type="molecule type" value="Genomic_DNA"/>
</dbReference>
<dbReference type="PIR" id="S54469">
    <property type="entry name" value="S54469"/>
</dbReference>
<dbReference type="RefSeq" id="NP_013811.1">
    <property type="nucleotide sequence ID" value="NM_001182593.1"/>
</dbReference>
<dbReference type="PDB" id="5WLC">
    <property type="method" value="EM"/>
    <property type="resolution" value="3.80 A"/>
    <property type="chains" value="LJ=1-513"/>
</dbReference>
<dbReference type="PDB" id="6KE6">
    <property type="method" value="EM"/>
    <property type="resolution" value="3.40 A"/>
    <property type="chains" value="AF=1-513"/>
</dbReference>
<dbReference type="PDB" id="6LQP">
    <property type="method" value="EM"/>
    <property type="resolution" value="3.20 A"/>
    <property type="chains" value="AF=1-513"/>
</dbReference>
<dbReference type="PDB" id="6LQQ">
    <property type="method" value="EM"/>
    <property type="resolution" value="4.10 A"/>
    <property type="chains" value="AF=1-513"/>
</dbReference>
<dbReference type="PDB" id="6LQR">
    <property type="method" value="EM"/>
    <property type="resolution" value="8.60 A"/>
    <property type="chains" value="AF=1-513"/>
</dbReference>
<dbReference type="PDB" id="6LQS">
    <property type="method" value="EM"/>
    <property type="resolution" value="3.80 A"/>
    <property type="chains" value="AF=1-513"/>
</dbReference>
<dbReference type="PDB" id="6LQT">
    <property type="method" value="EM"/>
    <property type="resolution" value="4.90 A"/>
    <property type="chains" value="AF=1-513"/>
</dbReference>
<dbReference type="PDB" id="6LQU">
    <property type="method" value="EM"/>
    <property type="resolution" value="3.70 A"/>
    <property type="chains" value="AF=1-513"/>
</dbReference>
<dbReference type="PDB" id="6LQV">
    <property type="method" value="EM"/>
    <property type="resolution" value="4.80 A"/>
    <property type="chains" value="AF=1-513"/>
</dbReference>
<dbReference type="PDB" id="6ND4">
    <property type="method" value="EM"/>
    <property type="resolution" value="4.30 A"/>
    <property type="chains" value="J=1-513"/>
</dbReference>
<dbReference type="PDB" id="6ZQA">
    <property type="method" value="EM"/>
    <property type="resolution" value="4.40 A"/>
    <property type="chains" value="UO=1-513"/>
</dbReference>
<dbReference type="PDB" id="6ZQB">
    <property type="method" value="EM"/>
    <property type="resolution" value="3.90 A"/>
    <property type="chains" value="UO=1-513"/>
</dbReference>
<dbReference type="PDB" id="6ZQC">
    <property type="method" value="EM"/>
    <property type="resolution" value="3.80 A"/>
    <property type="chains" value="UO=1-513"/>
</dbReference>
<dbReference type="PDB" id="6ZQD">
    <property type="method" value="EM"/>
    <property type="resolution" value="3.80 A"/>
    <property type="chains" value="UO=1-513"/>
</dbReference>
<dbReference type="PDB" id="6ZQE">
    <property type="method" value="EM"/>
    <property type="resolution" value="7.10 A"/>
    <property type="chains" value="UO=1-513"/>
</dbReference>
<dbReference type="PDB" id="7AJT">
    <property type="method" value="EM"/>
    <property type="resolution" value="4.60 A"/>
    <property type="chains" value="UO=1-513"/>
</dbReference>
<dbReference type="PDB" id="7AJU">
    <property type="method" value="EM"/>
    <property type="resolution" value="3.80 A"/>
    <property type="chains" value="UO=1-513"/>
</dbReference>
<dbReference type="PDB" id="7D4I">
    <property type="method" value="EM"/>
    <property type="resolution" value="4.00 A"/>
    <property type="chains" value="AF=1-513"/>
</dbReference>
<dbReference type="PDB" id="7D5S">
    <property type="method" value="EM"/>
    <property type="resolution" value="4.60 A"/>
    <property type="chains" value="AF=1-513"/>
</dbReference>
<dbReference type="PDB" id="7D63">
    <property type="method" value="EM"/>
    <property type="resolution" value="12.30 A"/>
    <property type="chains" value="AF=1-513"/>
</dbReference>
<dbReference type="PDB" id="7SUK">
    <property type="method" value="EM"/>
    <property type="resolution" value="3.99 A"/>
    <property type="chains" value="LJ=1-513"/>
</dbReference>
<dbReference type="PDBsum" id="5WLC"/>
<dbReference type="PDBsum" id="6KE6"/>
<dbReference type="PDBsum" id="6LQP"/>
<dbReference type="PDBsum" id="6LQQ"/>
<dbReference type="PDBsum" id="6LQR"/>
<dbReference type="PDBsum" id="6LQS"/>
<dbReference type="PDBsum" id="6LQT"/>
<dbReference type="PDBsum" id="6LQU"/>
<dbReference type="PDBsum" id="6LQV"/>
<dbReference type="PDBsum" id="6ND4"/>
<dbReference type="PDBsum" id="6ZQA"/>
<dbReference type="PDBsum" id="6ZQB"/>
<dbReference type="PDBsum" id="6ZQC"/>
<dbReference type="PDBsum" id="6ZQD"/>
<dbReference type="PDBsum" id="6ZQE"/>
<dbReference type="PDBsum" id="7AJT"/>
<dbReference type="PDBsum" id="7AJU"/>
<dbReference type="PDBsum" id="7D4I"/>
<dbReference type="PDBsum" id="7D5S"/>
<dbReference type="PDBsum" id="7D63"/>
<dbReference type="PDBsum" id="7SUK"/>
<dbReference type="EMDB" id="EMD-0441"/>
<dbReference type="EMDB" id="EMD-0949"/>
<dbReference type="EMDB" id="EMD-0950"/>
<dbReference type="EMDB" id="EMD-0951"/>
<dbReference type="EMDB" id="EMD-0952"/>
<dbReference type="EMDB" id="EMD-0953"/>
<dbReference type="EMDB" id="EMD-0954"/>
<dbReference type="EMDB" id="EMD-0955"/>
<dbReference type="EMDB" id="EMD-11357"/>
<dbReference type="EMDB" id="EMD-11358"/>
<dbReference type="EMDB" id="EMD-11359"/>
<dbReference type="EMDB" id="EMD-11360"/>
<dbReference type="EMDB" id="EMD-11361"/>
<dbReference type="EMDB" id="EMD-11807"/>
<dbReference type="EMDB" id="EMD-11808"/>
<dbReference type="EMDB" id="EMD-25441"/>
<dbReference type="EMDB" id="EMD-30574"/>
<dbReference type="EMDB" id="EMD-30584"/>
<dbReference type="EMDB" id="EMD-30588"/>
<dbReference type="EMDB" id="EMD-8859"/>
<dbReference type="EMDB" id="EMD-9964"/>
<dbReference type="SMR" id="Q04305"/>
<dbReference type="BioGRID" id="35268">
    <property type="interactions" value="477"/>
</dbReference>
<dbReference type="ComplexPortal" id="CPX-1409">
    <property type="entry name" value="UTP-A complex"/>
</dbReference>
<dbReference type="DIP" id="DIP-1962N"/>
<dbReference type="FunCoup" id="Q04305">
    <property type="interactions" value="1188"/>
</dbReference>
<dbReference type="IntAct" id="Q04305">
    <property type="interactions" value="98"/>
</dbReference>
<dbReference type="MINT" id="Q04305"/>
<dbReference type="STRING" id="4932.YMR093W"/>
<dbReference type="iPTMnet" id="Q04305"/>
<dbReference type="PaxDb" id="4932-YMR093W"/>
<dbReference type="PeptideAtlas" id="Q04305"/>
<dbReference type="EnsemblFungi" id="YMR093W_mRNA">
    <property type="protein sequence ID" value="YMR093W"/>
    <property type="gene ID" value="YMR093W"/>
</dbReference>
<dbReference type="GeneID" id="855118"/>
<dbReference type="KEGG" id="sce:YMR093W"/>
<dbReference type="AGR" id="SGD:S000004699"/>
<dbReference type="SGD" id="S000004699">
    <property type="gene designation" value="UTP15"/>
</dbReference>
<dbReference type="VEuPathDB" id="FungiDB:YMR093W"/>
<dbReference type="eggNOG" id="KOG0310">
    <property type="taxonomic scope" value="Eukaryota"/>
</dbReference>
<dbReference type="GeneTree" id="ENSGT00390000004228"/>
<dbReference type="HOGENOM" id="CLU_021102_0_0_1"/>
<dbReference type="InParanoid" id="Q04305"/>
<dbReference type="OMA" id="ATYQVVH"/>
<dbReference type="OrthoDB" id="431715at2759"/>
<dbReference type="BioCyc" id="YEAST:G3O-32793-MONOMER"/>
<dbReference type="Reactome" id="R-SCE-6791226">
    <property type="pathway name" value="Major pathway of rRNA processing in the nucleolus and cytosol"/>
</dbReference>
<dbReference type="BioGRID-ORCS" id="855118">
    <property type="hits" value="3 hits in 10 CRISPR screens"/>
</dbReference>
<dbReference type="CD-CODE" id="BDAE0F88">
    <property type="entry name" value="Nucleolus"/>
</dbReference>
<dbReference type="PRO" id="PR:Q04305"/>
<dbReference type="Proteomes" id="UP000002311">
    <property type="component" value="Chromosome XIII"/>
</dbReference>
<dbReference type="RNAct" id="Q04305">
    <property type="molecule type" value="protein"/>
</dbReference>
<dbReference type="GO" id="GO:0030686">
    <property type="term" value="C:90S preribosome"/>
    <property type="evidence" value="ECO:0007005"/>
    <property type="project" value="SGD"/>
</dbReference>
<dbReference type="GO" id="GO:0005730">
    <property type="term" value="C:nucleolus"/>
    <property type="evidence" value="ECO:0000314"/>
    <property type="project" value="SGD"/>
</dbReference>
<dbReference type="GO" id="GO:0005654">
    <property type="term" value="C:nucleoplasm"/>
    <property type="evidence" value="ECO:0000304"/>
    <property type="project" value="Reactome"/>
</dbReference>
<dbReference type="GO" id="GO:0033553">
    <property type="term" value="C:rDNA heterochromatin"/>
    <property type="evidence" value="ECO:0000314"/>
    <property type="project" value="SGD"/>
</dbReference>
<dbReference type="GO" id="GO:0032040">
    <property type="term" value="C:small-subunit processome"/>
    <property type="evidence" value="ECO:0000314"/>
    <property type="project" value="SGD"/>
</dbReference>
<dbReference type="GO" id="GO:0034455">
    <property type="term" value="C:t-UTP complex"/>
    <property type="evidence" value="ECO:0000314"/>
    <property type="project" value="SGD"/>
</dbReference>
<dbReference type="GO" id="GO:0034511">
    <property type="term" value="F:U3 snoRNA binding"/>
    <property type="evidence" value="ECO:0000314"/>
    <property type="project" value="SGD"/>
</dbReference>
<dbReference type="GO" id="GO:0030490">
    <property type="term" value="P:maturation of SSU-rRNA"/>
    <property type="evidence" value="ECO:0000303"/>
    <property type="project" value="ComplexPortal"/>
</dbReference>
<dbReference type="GO" id="GO:0000462">
    <property type="term" value="P:maturation of SSU-rRNA from tricistronic rRNA transcript (SSU-rRNA, 5.8S rRNA, LSU-rRNA)"/>
    <property type="evidence" value="ECO:0000315"/>
    <property type="project" value="SGD"/>
</dbReference>
<dbReference type="GO" id="GO:0045943">
    <property type="term" value="P:positive regulation of transcription by RNA polymerase I"/>
    <property type="evidence" value="ECO:0000315"/>
    <property type="project" value="SGD"/>
</dbReference>
<dbReference type="GO" id="GO:0006364">
    <property type="term" value="P:rRNA processing"/>
    <property type="evidence" value="ECO:0000318"/>
    <property type="project" value="GO_Central"/>
</dbReference>
<dbReference type="FunFam" id="2.130.10.10:FF:000551">
    <property type="entry name" value="UTP15p Nucleolar protein"/>
    <property type="match status" value="1"/>
</dbReference>
<dbReference type="FunFam" id="2.130.10.10:FF:001186">
    <property type="entry name" value="UTP15p Nucleolar protein"/>
    <property type="match status" value="1"/>
</dbReference>
<dbReference type="Gene3D" id="2.130.10.10">
    <property type="entry name" value="YVTN repeat-like/Quinoprotein amine dehydrogenase"/>
    <property type="match status" value="2"/>
</dbReference>
<dbReference type="InterPro" id="IPR018983">
    <property type="entry name" value="U3_snoRNA-assocProt_15_C"/>
</dbReference>
<dbReference type="InterPro" id="IPR015943">
    <property type="entry name" value="WD40/YVTN_repeat-like_dom_sf"/>
</dbReference>
<dbReference type="InterPro" id="IPR019775">
    <property type="entry name" value="WD40_repeat_CS"/>
</dbReference>
<dbReference type="InterPro" id="IPR036322">
    <property type="entry name" value="WD40_repeat_dom_sf"/>
</dbReference>
<dbReference type="InterPro" id="IPR001680">
    <property type="entry name" value="WD40_rpt"/>
</dbReference>
<dbReference type="PANTHER" id="PTHR19924:SF26">
    <property type="entry name" value="U3 SMALL NUCLEOLAR RNA-ASSOCIATED PROTEIN 15 HOMOLOG"/>
    <property type="match status" value="1"/>
</dbReference>
<dbReference type="PANTHER" id="PTHR19924">
    <property type="entry name" value="UTP15 U3 SMALL NUCLEOLAR RNA-ASSOCIATED PROTEIN 15 FAMILY MEMBER"/>
    <property type="match status" value="1"/>
</dbReference>
<dbReference type="Pfam" id="PF09384">
    <property type="entry name" value="UTP15_C"/>
    <property type="match status" value="1"/>
</dbReference>
<dbReference type="Pfam" id="PF00400">
    <property type="entry name" value="WD40"/>
    <property type="match status" value="3"/>
</dbReference>
<dbReference type="SMART" id="SM00320">
    <property type="entry name" value="WD40"/>
    <property type="match status" value="6"/>
</dbReference>
<dbReference type="SUPFAM" id="SSF50978">
    <property type="entry name" value="WD40 repeat-like"/>
    <property type="match status" value="1"/>
</dbReference>
<dbReference type="PROSITE" id="PS00678">
    <property type="entry name" value="WD_REPEATS_1"/>
    <property type="match status" value="1"/>
</dbReference>
<dbReference type="PROSITE" id="PS50082">
    <property type="entry name" value="WD_REPEATS_2"/>
    <property type="match status" value="2"/>
</dbReference>
<dbReference type="PROSITE" id="PS50294">
    <property type="entry name" value="WD_REPEATS_REGION"/>
    <property type="match status" value="1"/>
</dbReference>
<protein>
    <recommendedName>
        <fullName>U3 small nucleolar RNA-associated protein 15</fullName>
        <shortName>U3 snoRNA-associated protein 15</shortName>
    </recommendedName>
    <alternativeName>
        <fullName>U three protein 15</fullName>
    </alternativeName>
    <alternativeName>
        <fullName>U3 protein 15 required for transcription</fullName>
    </alternativeName>
    <alternativeName>
        <fullName>t-UTP15</fullName>
    </alternativeName>
</protein>
<comment type="function">
    <text evidence="2 4">Involved in nucleolar processing of pre-18S ribosomal RNA. Required for optimal pre-ribosomal RNA transcription by RNA polymerase I together with a subset of U3 proteins required for transcription (t-UTPs).</text>
</comment>
<comment type="subunit">
    <text evidence="2 4">Interacts with snoRNA U3. Interacts with MPP10. Component of the ribosomal small subunit (SSU) processome composed of at least 40 protein subunits and snoRNA U3. In the absence of snoRNA3, forms a complex with other t-UTPs. This complex can associate with pre-18S ribosomal RNAs.</text>
</comment>
<comment type="interaction">
    <interactant intactId="EBI-28183">
        <id>Q04305</id>
    </interactant>
    <interactant intactId="EBI-31770">
        <id>Q12481</id>
        <label>RRP36</label>
    </interactant>
    <organismsDiffer>false</organismsDiffer>
    <experiments>2</experiments>
</comment>
<comment type="interaction">
    <interactant intactId="EBI-28183">
        <id>Q04305</id>
    </interactant>
    <interactant intactId="EBI-35844">
        <id>Q04177</id>
        <label>UTP5</label>
    </interactant>
    <organismsDiffer>false</organismsDiffer>
    <experiments>11</experiments>
</comment>
<comment type="interaction">
    <interactant intactId="EBI-28183">
        <id>Q04305</id>
    </interactant>
    <interactant intactId="EBI-23301">
        <id>P53276</id>
        <label>UTP8</label>
    </interactant>
    <organismsDiffer>false</organismsDiffer>
    <experiments>10</experiments>
</comment>
<comment type="interaction">
    <interactant intactId="EBI-28183">
        <id>Q04305</id>
    </interactant>
    <interactant intactId="EBI-24892">
        <id>P38882</id>
        <label>UTP9</label>
    </interactant>
    <organismsDiffer>false</organismsDiffer>
    <experiments>11</experiments>
</comment>
<comment type="subcellular location">
    <subcellularLocation>
        <location evidence="2 4">Nucleus</location>
        <location evidence="2 4">Nucleolus</location>
    </subcellularLocation>
    <text>Associated with ribosomal chromatin, even in the absence of transcription.</text>
</comment>
<comment type="miscellaneous">
    <text evidence="3">Present with 358 molecules/cell in log phase SD medium.</text>
</comment>